<protein>
    <recommendedName>
        <fullName>Uncharacterized protein UL116</fullName>
    </recommendedName>
</protein>
<dbReference type="EMBL" id="X17403">
    <property type="protein sequence ID" value="CAA35318.1"/>
    <property type="status" value="ALT_INIT"/>
    <property type="molecule type" value="Genomic_DNA"/>
</dbReference>
<dbReference type="EMBL" id="BK000394">
    <property type="protein sequence ID" value="DAA00106.1"/>
    <property type="molecule type" value="Genomic_DNA"/>
</dbReference>
<dbReference type="PIR" id="S09883">
    <property type="entry name" value="S09883"/>
</dbReference>
<dbReference type="SMR" id="P16833"/>
<dbReference type="GlyCosmos" id="P16833">
    <property type="glycosylation" value="14 sites, No reported glycans"/>
</dbReference>
<dbReference type="Proteomes" id="UP000008991">
    <property type="component" value="Segment"/>
</dbReference>
<dbReference type="Proteomes" id="UP000008992">
    <property type="component" value="Segment"/>
</dbReference>
<dbReference type="GO" id="GO:0044165">
    <property type="term" value="C:host cell endoplasmic reticulum"/>
    <property type="evidence" value="ECO:0007669"/>
    <property type="project" value="UniProtKB-SubCell"/>
</dbReference>
<dbReference type="GO" id="GO:0044423">
    <property type="term" value="C:virion component"/>
    <property type="evidence" value="ECO:0007669"/>
    <property type="project" value="UniProtKB-KW"/>
</dbReference>
<gene>
    <name type="primary">UL116</name>
</gene>
<comment type="function">
    <text evidence="3 4 5">Chaperone protein that cooperates with UL148 to regulate the abundance of gH complexes in virion (PubMed:26937030, PubMed:33889136). First interactor of gH in the host endoplasmic reticulum, regulates the early folding steps of virion assembly. Then, UL148 is recruited and favors the binding of gL (PubMed:34011552).</text>
</comment>
<comment type="subunit">
    <text evidence="3 4 5">Interacts with gH (PubMed:26937030). Interacts with UL148 (PubMed:33889136, PubMed:34011552).</text>
</comment>
<comment type="subcellular location">
    <subcellularLocation>
        <location evidence="3">Virion</location>
    </subcellularLocation>
    <subcellularLocation>
        <location evidence="3">Host endoplasmic reticulum</location>
    </subcellularLocation>
    <text evidence="3">First localizes to the cellular site of virus assembly and then inserts into the virion envelope.</text>
</comment>
<comment type="PTM">
    <text evidence="3">Highly glycosylated.</text>
</comment>
<comment type="disruption phenotype">
    <text evidence="4">Deletion causes infectivity defects of about 10-fold compared to wild-type virus and leads to reduced expression of both gH/gL complexes in virions.</text>
</comment>
<comment type="similarity">
    <text evidence="6">Belongs to the HHV-5 UL116 protein family.</text>
</comment>
<comment type="sequence caution" evidence="6">
    <conflict type="erroneous initiation">
        <sequence resource="EMBL-CDS" id="CAA35318"/>
    </conflict>
</comment>
<sequence>MKRRRRWRGWLLFPALCFCLLCEAVETNATTVTSTTAAAATTNTTVATTGTTTTSPNVTSTTSNTVTTPTTVSSVSNLTSSTTSIPISTSTVSGTRNTGNNNTTTIGTNATSPSPSVSILTTVTPAATSTISVDGVVTASDYTPTFDDLENITTTRAPTRPPAQDLCSHNLSIILYEEESQSSVDIAVDEEEPELEDDDEYDELWFPLYFEAECNRNYTLHVNHSCDYSVRQSSVSFPPWRDIDSVTFVPRNLSNCSAHGLAVIVAGNQTWYVNPFSLAHLLDAIYNVLGIEDLSANFRRQLAPYRHTLIVPQT</sequence>
<name>UL116_HCMVA</name>
<organismHost>
    <name type="scientific">Homo sapiens</name>
    <name type="common">Human</name>
    <dbReference type="NCBI Taxonomy" id="9606"/>
</organismHost>
<proteinExistence type="evidence at protein level"/>
<feature type="signal peptide" evidence="1">
    <location>
        <begin position="1"/>
        <end position="24"/>
    </location>
</feature>
<feature type="chain" id="PRO_0000037456" description="Uncharacterized protein UL116">
    <location>
        <begin position="25"/>
        <end position="314"/>
    </location>
</feature>
<feature type="region of interest" description="Disordered" evidence="2">
    <location>
        <begin position="47"/>
        <end position="116"/>
    </location>
</feature>
<feature type="compositionally biased region" description="Low complexity" evidence="2">
    <location>
        <begin position="47"/>
        <end position="114"/>
    </location>
</feature>
<feature type="glycosylation site" description="N-linked (GlcNAc...) asparagine; by host" evidence="1">
    <location>
        <position position="28"/>
    </location>
</feature>
<feature type="glycosylation site" description="N-linked (GlcNAc...) asparagine; by host" evidence="1">
    <location>
        <position position="43"/>
    </location>
</feature>
<feature type="glycosylation site" description="N-linked (GlcNAc...) asparagine; by host" evidence="1">
    <location>
        <position position="57"/>
    </location>
</feature>
<feature type="glycosylation site" description="N-linked (GlcNAc...) asparagine; by host" evidence="1">
    <location>
        <position position="77"/>
    </location>
</feature>
<feature type="glycosylation site" description="N-linked (GlcNAc...) asparagine; by host" evidence="1">
    <location>
        <position position="101"/>
    </location>
</feature>
<feature type="glycosylation site" description="N-linked (GlcNAc...) asparagine; by host" evidence="1">
    <location>
        <position position="102"/>
    </location>
</feature>
<feature type="glycosylation site" description="N-linked (GlcNAc...) asparagine; by host" evidence="1">
    <location>
        <position position="109"/>
    </location>
</feature>
<feature type="glycosylation site" description="N-linked (GlcNAc...) asparagine; by host" evidence="1">
    <location>
        <position position="151"/>
    </location>
</feature>
<feature type="glycosylation site" description="N-linked (GlcNAc...) asparagine; by host" evidence="1">
    <location>
        <position position="170"/>
    </location>
</feature>
<feature type="glycosylation site" description="N-linked (GlcNAc...) asparagine; by host" evidence="1">
    <location>
        <position position="217"/>
    </location>
</feature>
<feature type="glycosylation site" description="N-linked (GlcNAc...) asparagine; by host" evidence="1">
    <location>
        <position position="223"/>
    </location>
</feature>
<feature type="glycosylation site" description="N-linked (GlcNAc...) asparagine; by host" evidence="1">
    <location>
        <position position="252"/>
    </location>
</feature>
<feature type="glycosylation site" description="N-linked (GlcNAc...) asparagine; by host" evidence="1">
    <location>
        <position position="255"/>
    </location>
</feature>
<feature type="glycosylation site" description="N-linked (GlcNAc...) asparagine; by host" evidence="1">
    <location>
        <position position="268"/>
    </location>
</feature>
<evidence type="ECO:0000255" key="1"/>
<evidence type="ECO:0000256" key="2">
    <source>
        <dbReference type="SAM" id="MobiDB-lite"/>
    </source>
</evidence>
<evidence type="ECO:0000269" key="3">
    <source>
    </source>
</evidence>
<evidence type="ECO:0000269" key="4">
    <source>
    </source>
</evidence>
<evidence type="ECO:0000269" key="5">
    <source>
    </source>
</evidence>
<evidence type="ECO:0000305" key="6"/>
<reference key="1">
    <citation type="journal article" date="1990" name="Curr. Top. Microbiol. Immunol.">
        <title>Analysis of the protein-coding content of the sequence of human cytomegalovirus strain AD169.</title>
        <authorList>
            <person name="Chee M.S."/>
            <person name="Bankier A.T."/>
            <person name="Beck S."/>
            <person name="Bohni R."/>
            <person name="Brown C.M."/>
            <person name="Cerny R."/>
            <person name="Horsnell T."/>
            <person name="Hutchison C.A. III"/>
            <person name="Kouzarides T."/>
            <person name="Martignetti J.A."/>
            <person name="Preddie E."/>
            <person name="Satchwell S.C."/>
            <person name="Tomlinson P."/>
            <person name="Weston K.M."/>
            <person name="Barrell B.G."/>
        </authorList>
    </citation>
    <scope>NUCLEOTIDE SEQUENCE [LARGE SCALE GENOMIC DNA]</scope>
</reference>
<reference key="2">
    <citation type="journal article" date="2003" name="J. Gen. Virol.">
        <title>The human cytomegalovirus genome revisited: comparison with the chimpanzee cytomegalovirus genome.</title>
        <authorList>
            <person name="Davison A.J."/>
            <person name="Dolan A."/>
            <person name="Akter P."/>
            <person name="Addison C."/>
            <person name="Dargan D.J."/>
            <person name="Alcendor D.J."/>
            <person name="McGeoch D.J."/>
            <person name="Hayward G.S."/>
        </authorList>
    </citation>
    <scope>GENOME REANNOTATION</scope>
</reference>
<reference key="3">
    <citation type="journal article" date="2003" name="J. Gen. Virol.">
        <authorList>
            <person name="Davison A.J."/>
            <person name="Dolan A."/>
            <person name="Akter P."/>
            <person name="Addison C."/>
            <person name="Dargan D.J."/>
            <person name="Alcendor D.J."/>
            <person name="McGeoch D.J."/>
            <person name="Hayward G.S."/>
        </authorList>
    </citation>
    <scope>ERRATUM OF PUBMED:12533697</scope>
</reference>
<reference key="4">
    <citation type="journal article" date="2016" name="J. Virol.">
        <title>The Human Cytomegalovirus UL116 Gene Encodes an Envelope Glycoprotein Forming a Complex with gH Independently from gL.</title>
        <authorList>
            <person name="Calo S."/>
            <person name="Cortese M."/>
            <person name="Ciferri C."/>
            <person name="Bruno L."/>
            <person name="Gerrein R."/>
            <person name="Benucci B."/>
            <person name="Monda G."/>
            <person name="Gentile M."/>
            <person name="Kessler T."/>
            <person name="Uematsu Y."/>
            <person name="Maione D."/>
            <person name="Lilja A.E."/>
            <person name="Carfi A."/>
            <person name="Merola M."/>
        </authorList>
    </citation>
    <scope>FUNCTION</scope>
    <scope>INTERACTION WITH GH</scope>
    <scope>SUBCELLULAR LOCATION</scope>
    <scope>GLYCOSYLATION</scope>
    <source>
        <strain>TR</strain>
    </source>
</reference>
<reference key="5">
    <citation type="journal article" date="2021" name="Front. Microbiol.">
        <title>The Human Cytomegalovirus UL116 Glycoprotein Is a Chaperone to Control gH-Based Complexes Levels on Virions.</title>
        <authorList>
            <person name="Vezzani G."/>
            <person name="Amendola D."/>
            <person name="Yu D."/>
            <person name="Chandramouli S."/>
            <person name="Frigimelica E."/>
            <person name="Maione D."/>
            <person name="Merola M."/>
        </authorList>
    </citation>
    <scope>FUNCTION</scope>
    <scope>INTERACTION WITH UL148</scope>
    <scope>DISRUPTION PHENOTYPE</scope>
</reference>
<reference key="6">
    <citation type="journal article" date="2021" name="J. Virol.">
        <title>The Human Cytomegalovirus Protein UL116 Interacts with the Viral Endoplasmic-Reticulum-Resident Glycoprotein UL148 and Promotes the Incorporation of gH/gL Complexes into Virions.</title>
        <authorList>
            <person name="Siddiquey M.N.A."/>
            <person name="Schultz E.P."/>
            <person name="Yu Q."/>
            <person name="Amendola D."/>
            <person name="Vezzani G."/>
            <person name="Yu D."/>
            <person name="Maione D."/>
            <person name="Lanchy J.M."/>
            <person name="Ryckman B.J."/>
            <person name="Merola M."/>
            <person name="Kamil J.P."/>
        </authorList>
    </citation>
    <scope>FUNCTION</scope>
    <scope>INTERACTION WITH UL148</scope>
</reference>
<keyword id="KW-0325">Glycoprotein</keyword>
<keyword id="KW-1038">Host endoplasmic reticulum</keyword>
<keyword id="KW-1185">Reference proteome</keyword>
<keyword id="KW-0732">Signal</keyword>
<keyword id="KW-0946">Virion</keyword>
<organism>
    <name type="scientific">Human cytomegalovirus (strain AD169)</name>
    <name type="common">HHV-5</name>
    <name type="synonym">Human herpesvirus 5</name>
    <dbReference type="NCBI Taxonomy" id="10360"/>
    <lineage>
        <taxon>Viruses</taxon>
        <taxon>Duplodnaviria</taxon>
        <taxon>Heunggongvirae</taxon>
        <taxon>Peploviricota</taxon>
        <taxon>Herviviricetes</taxon>
        <taxon>Herpesvirales</taxon>
        <taxon>Orthoherpesviridae</taxon>
        <taxon>Betaherpesvirinae</taxon>
        <taxon>Cytomegalovirus</taxon>
        <taxon>Cytomegalovirus humanbeta5</taxon>
        <taxon>Human cytomegalovirus</taxon>
    </lineage>
</organism>
<accession>P16833</accession>
<accession>Q9PY28</accession>